<accession>B1WB39</accession>
<proteinExistence type="evidence at transcript level"/>
<evidence type="ECO:0000250" key="1"/>
<evidence type="ECO:0000250" key="2">
    <source>
        <dbReference type="UniProtKB" id="Q92839"/>
    </source>
</evidence>
<evidence type="ECO:0000255" key="3"/>
<evidence type="ECO:0000305" key="4"/>
<evidence type="ECO:0000312" key="5">
    <source>
        <dbReference type="EMBL" id="AAI61605.1"/>
    </source>
</evidence>
<comment type="function">
    <text evidence="1">Catalyzes the addition of GlcNAc or GlcUA monosaccharides to the nascent hyaluronan polymer. Therefore, it is essential to hyaluronan synthesis a major component of most extracellular matrices that has a structural role in tissues architectures and regulates cell adhesion, migration and differentiation. Also able to catalyze the synthesis of chito-oligosaccharide depending on the substrate (By similarity).</text>
</comment>
<comment type="catalytic activity">
    <reaction evidence="2">
        <text>[hyaluronan](n) + UDP-N-acetyl-alpha-D-glucosamine = N-acetyl-beta-D-glucosaminyl-(1-&gt;4)-[hyaluronan](n) + UDP + H(+)</text>
        <dbReference type="Rhea" id="RHEA:20465"/>
        <dbReference type="Rhea" id="RHEA-COMP:12583"/>
        <dbReference type="Rhea" id="RHEA-COMP:12585"/>
        <dbReference type="ChEBI" id="CHEBI:15378"/>
        <dbReference type="ChEBI" id="CHEBI:57705"/>
        <dbReference type="ChEBI" id="CHEBI:58223"/>
        <dbReference type="ChEBI" id="CHEBI:132153"/>
        <dbReference type="ChEBI" id="CHEBI:132154"/>
        <dbReference type="EC" id="2.4.1.212"/>
    </reaction>
</comment>
<comment type="catalytic activity">
    <reaction evidence="2">
        <text>N-acetyl-beta-D-glucosaminyl-(1-&gt;4)-[hyaluronan](n) + UDP-alpha-D-glucuronate = [hyaluronan](n+1) + UDP + H(+)</text>
        <dbReference type="Rhea" id="RHEA:12528"/>
        <dbReference type="Rhea" id="RHEA-COMP:12585"/>
        <dbReference type="Rhea" id="RHEA-COMP:12587"/>
        <dbReference type="ChEBI" id="CHEBI:15378"/>
        <dbReference type="ChEBI" id="CHEBI:58052"/>
        <dbReference type="ChEBI" id="CHEBI:58223"/>
        <dbReference type="ChEBI" id="CHEBI:132153"/>
        <dbReference type="ChEBI" id="CHEBI:132154"/>
        <dbReference type="EC" id="2.4.1.212"/>
    </reaction>
</comment>
<comment type="cofactor">
    <cofactor evidence="2">
        <name>Mg(2+)</name>
        <dbReference type="ChEBI" id="CHEBI:18420"/>
    </cofactor>
</comment>
<comment type="pathway">
    <text evidence="2">Glycan biosynthesis; hyaluronan biosynthesis.</text>
</comment>
<comment type="subcellular location">
    <subcellularLocation>
        <location evidence="3 4">Membrane</location>
        <topology evidence="3 4">Multi-pass membrane protein</topology>
    </subcellularLocation>
</comment>
<comment type="similarity">
    <text evidence="4">Belongs to the NodC/HAS family.</text>
</comment>
<gene>
    <name type="primary">has1</name>
</gene>
<feature type="chain" id="PRO_0000392432" description="Hyaluronan synthase 1">
    <location>
        <begin position="1"/>
        <end position="590"/>
    </location>
</feature>
<feature type="topological domain" description="Cytoplasmic" evidence="3">
    <location>
        <begin position="1"/>
        <end position="31"/>
    </location>
</feature>
<feature type="transmembrane region" description="Helical" evidence="3">
    <location>
        <begin position="32"/>
        <end position="52"/>
    </location>
</feature>
<feature type="topological domain" description="Extracellular" evidence="3">
    <location>
        <begin position="53"/>
        <end position="60"/>
    </location>
</feature>
<feature type="transmembrane region" description="Helical" evidence="3">
    <location>
        <begin position="61"/>
        <end position="81"/>
    </location>
</feature>
<feature type="topological domain" description="Cytoplasmic" evidence="3">
    <location>
        <begin position="82"/>
        <end position="401"/>
    </location>
</feature>
<feature type="transmembrane region" description="Helical" evidence="3">
    <location>
        <begin position="402"/>
        <end position="422"/>
    </location>
</feature>
<feature type="topological domain" description="Extracellular" evidence="3">
    <location>
        <begin position="423"/>
        <end position="425"/>
    </location>
</feature>
<feature type="transmembrane region" description="Helical" evidence="3">
    <location>
        <begin position="426"/>
        <end position="446"/>
    </location>
</feature>
<feature type="topological domain" description="Cytoplasmic" evidence="3">
    <location>
        <begin position="447"/>
        <end position="456"/>
    </location>
</feature>
<feature type="transmembrane region" description="Helical" evidence="3">
    <location>
        <begin position="457"/>
        <end position="477"/>
    </location>
</feature>
<feature type="topological domain" description="Extracellular" evidence="3">
    <location>
        <begin position="478"/>
        <end position="505"/>
    </location>
</feature>
<feature type="transmembrane region" description="Helical" evidence="3">
    <location>
        <begin position="506"/>
        <end position="526"/>
    </location>
</feature>
<feature type="topological domain" description="Cytoplasmic" evidence="3">
    <location>
        <begin position="527"/>
        <end position="543"/>
    </location>
</feature>
<feature type="transmembrane region" description="Helical" evidence="3">
    <location>
        <begin position="544"/>
        <end position="564"/>
    </location>
</feature>
<feature type="topological domain" description="Extracellular" evidence="3">
    <location>
        <begin position="565"/>
        <end position="588"/>
    </location>
</feature>
<reference evidence="5" key="1">
    <citation type="submission" date="2008-04" db="EMBL/GenBank/DDBJ databases">
        <authorList>
            <consortium name="NIH - Xenopus Gene Collection (XGC) project"/>
        </authorList>
    </citation>
    <scope>NUCLEOTIDE SEQUENCE [LARGE SCALE MRNA]</scope>
    <source>
        <tissue evidence="5">Gastrula</tissue>
    </source>
</reference>
<sequence length="590" mass="68928">MKDKAAATMEIPEDPGIPKNLERKRPIVWRMIYYSFAVLLLAAFTAAYVTEFQILTHEDVLFSLGLYGLVMFLHLMMQSLFAYLEIRRINKTDLPCSFKKTVALTIAGYQENPDYLKHCLDSCRYVKYPKDKLKIILVIDGNTEDDAYMMEMFKDVFHGDDVGTYVWKGNYHTGVKETQDGSCPEVSKPLNEDEGIRIVEELVRTKRCVCIMQQWGGKREVMYTAFRAIGTTMDYVQVCDSDTKLDELATVEMVKVLEANELCGAVGGDVRILNPYDSFISFMSSLRYWMAFNVERACQSYFDCVSCISGPLGMYRNDILQVFLEAWHSQKFLGTYCTLGDDRHLTNRVLSMGYRTKYTPKCRAFSETPSQYLRWLNQQTRWTKSYFREWLYNAQWWYKHHIWMTYESVVHFIFPFFITATVIRLLYASTIWNVVWLLLCIQIMSVLKSLYACWLRGNPIMLLMSLYSMLYMTGLLPSKYFAMLTINKSGWGTSGRKKIVGNYMPVLPLSIWMAVLCGGVGYSIYMDCHQDWSTPEKQKELYHLLYGCISYTLYWVLMALMYWVWVKRCCRKRSQTVTLVHDIPERLVCK</sequence>
<protein>
    <recommendedName>
        <fullName evidence="2">Hyaluronan synthase 1</fullName>
        <ecNumber>2.4.1.212</ecNumber>
    </recommendedName>
    <alternativeName>
        <fullName evidence="2">Hyaluronate synthase 1</fullName>
    </alternativeName>
    <alternativeName>
        <fullName evidence="2">Hyaluronic acid synthase 1</fullName>
        <shortName evidence="2">HA synthase 1</shortName>
    </alternativeName>
</protein>
<keyword id="KW-0328">Glycosyltransferase</keyword>
<keyword id="KW-0472">Membrane</keyword>
<keyword id="KW-1185">Reference proteome</keyword>
<keyword id="KW-0808">Transferase</keyword>
<keyword id="KW-0812">Transmembrane</keyword>
<keyword id="KW-1133">Transmembrane helix</keyword>
<organism>
    <name type="scientific">Xenopus tropicalis</name>
    <name type="common">Western clawed frog</name>
    <name type="synonym">Silurana tropicalis</name>
    <dbReference type="NCBI Taxonomy" id="8364"/>
    <lineage>
        <taxon>Eukaryota</taxon>
        <taxon>Metazoa</taxon>
        <taxon>Chordata</taxon>
        <taxon>Craniata</taxon>
        <taxon>Vertebrata</taxon>
        <taxon>Euteleostomi</taxon>
        <taxon>Amphibia</taxon>
        <taxon>Batrachia</taxon>
        <taxon>Anura</taxon>
        <taxon>Pipoidea</taxon>
        <taxon>Pipidae</taxon>
        <taxon>Xenopodinae</taxon>
        <taxon>Xenopus</taxon>
        <taxon>Silurana</taxon>
    </lineage>
</organism>
<dbReference type="EC" id="2.4.1.212"/>
<dbReference type="EMBL" id="BC161605">
    <property type="protein sequence ID" value="AAI61605.1"/>
    <property type="molecule type" value="mRNA"/>
</dbReference>
<dbReference type="RefSeq" id="NP_001120590.1">
    <property type="nucleotide sequence ID" value="NM_001127118.1"/>
</dbReference>
<dbReference type="SMR" id="B1WB39"/>
<dbReference type="CAZy" id="GT2">
    <property type="family name" value="Glycosyltransferase Family 2"/>
</dbReference>
<dbReference type="GeneID" id="100145746"/>
<dbReference type="KEGG" id="xtr:100145746"/>
<dbReference type="AGR" id="Xenbase:XB-GENE-961588"/>
<dbReference type="CTD" id="100145746"/>
<dbReference type="Xenbase" id="XB-GENE-961588">
    <property type="gene designation" value="has1"/>
</dbReference>
<dbReference type="InParanoid" id="B1WB39"/>
<dbReference type="OMA" id="NSHETYT"/>
<dbReference type="OrthoDB" id="9876900at2759"/>
<dbReference type="UniPathway" id="UPA00341"/>
<dbReference type="Proteomes" id="UP000008143">
    <property type="component" value="Chromosome 3"/>
</dbReference>
<dbReference type="GO" id="GO:0016020">
    <property type="term" value="C:membrane"/>
    <property type="evidence" value="ECO:0007669"/>
    <property type="project" value="UniProtKB-SubCell"/>
</dbReference>
<dbReference type="GO" id="GO:0050501">
    <property type="term" value="F:hyaluronan synthase activity"/>
    <property type="evidence" value="ECO:0000250"/>
    <property type="project" value="UniProtKB"/>
</dbReference>
<dbReference type="GO" id="GO:0085029">
    <property type="term" value="P:extracellular matrix assembly"/>
    <property type="evidence" value="ECO:0000250"/>
    <property type="project" value="UniProtKB"/>
</dbReference>
<dbReference type="GO" id="GO:0030213">
    <property type="term" value="P:hyaluronan biosynthetic process"/>
    <property type="evidence" value="ECO:0007669"/>
    <property type="project" value="UniProtKB-UniPathway"/>
</dbReference>
<dbReference type="GO" id="GO:0000271">
    <property type="term" value="P:polysaccharide biosynthetic process"/>
    <property type="evidence" value="ECO:0000250"/>
    <property type="project" value="UniProtKB"/>
</dbReference>
<dbReference type="Gene3D" id="3.90.550.10">
    <property type="entry name" value="Spore Coat Polysaccharide Biosynthesis Protein SpsA, Chain A"/>
    <property type="match status" value="1"/>
</dbReference>
<dbReference type="InterPro" id="IPR029044">
    <property type="entry name" value="Nucleotide-diphossugar_trans"/>
</dbReference>
<dbReference type="PANTHER" id="PTHR22913">
    <property type="entry name" value="HYALURONAN SYNTHASE"/>
    <property type="match status" value="1"/>
</dbReference>
<dbReference type="PANTHER" id="PTHR22913:SF13">
    <property type="entry name" value="HYALURONAN SYNTHASE 1"/>
    <property type="match status" value="1"/>
</dbReference>
<dbReference type="Pfam" id="PF13641">
    <property type="entry name" value="Glyco_tranf_2_3"/>
    <property type="match status" value="1"/>
</dbReference>
<dbReference type="SUPFAM" id="SSF53448">
    <property type="entry name" value="Nucleotide-diphospho-sugar transferases"/>
    <property type="match status" value="1"/>
</dbReference>
<name>HYAS1_XENTR</name>